<name>RISB_NITWN</name>
<evidence type="ECO:0000255" key="1">
    <source>
        <dbReference type="HAMAP-Rule" id="MF_00178"/>
    </source>
</evidence>
<reference key="1">
    <citation type="journal article" date="2006" name="Appl. Environ. Microbiol.">
        <title>Genome sequence of the chemolithoautotrophic nitrite-oxidizing bacterium Nitrobacter winogradskyi Nb-255.</title>
        <authorList>
            <person name="Starkenburg S.R."/>
            <person name="Chain P.S.G."/>
            <person name="Sayavedra-Soto L.A."/>
            <person name="Hauser L."/>
            <person name="Land M.L."/>
            <person name="Larimer F.W."/>
            <person name="Malfatti S.A."/>
            <person name="Klotz M.G."/>
            <person name="Bottomley P.J."/>
            <person name="Arp D.J."/>
            <person name="Hickey W.J."/>
        </authorList>
    </citation>
    <scope>NUCLEOTIDE SEQUENCE [LARGE SCALE GENOMIC DNA]</scope>
    <source>
        <strain>ATCC 25391 / DSM 10237 / CIP 104748 / NCIMB 11846 / Nb-255</strain>
    </source>
</reference>
<accession>Q3SRV7</accession>
<proteinExistence type="inferred from homology"/>
<sequence length="163" mass="17284">MAEARHAPLKDQTSVSGARVLIVEARFYDDIQDALLEGAVAELQSAGVRHDVVTVPGALEIPAAIVFALDAAERRGEPYDAVVALGCVVRGDTIHFEIVSMESARALMDLSVKRGVALGNGIITVDTDAQAWARARAGELNKGGHAAQAALTMLRMKRRLAKA</sequence>
<feature type="chain" id="PRO_1000040467" description="6,7-dimethyl-8-ribityllumazine synthase">
    <location>
        <begin position="1"/>
        <end position="163"/>
    </location>
</feature>
<feature type="active site" description="Proton donor" evidence="1">
    <location>
        <position position="95"/>
    </location>
</feature>
<feature type="binding site" evidence="1">
    <location>
        <position position="27"/>
    </location>
    <ligand>
        <name>5-amino-6-(D-ribitylamino)uracil</name>
        <dbReference type="ChEBI" id="CHEBI:15934"/>
    </ligand>
</feature>
<feature type="binding site" evidence="1">
    <location>
        <begin position="58"/>
        <end position="60"/>
    </location>
    <ligand>
        <name>5-amino-6-(D-ribitylamino)uracil</name>
        <dbReference type="ChEBI" id="CHEBI:15934"/>
    </ligand>
</feature>
<feature type="binding site" evidence="1">
    <location>
        <begin position="87"/>
        <end position="89"/>
    </location>
    <ligand>
        <name>5-amino-6-(D-ribitylamino)uracil</name>
        <dbReference type="ChEBI" id="CHEBI:15934"/>
    </ligand>
</feature>
<feature type="binding site" evidence="1">
    <location>
        <begin position="92"/>
        <end position="93"/>
    </location>
    <ligand>
        <name>(2S)-2-hydroxy-3-oxobutyl phosphate</name>
        <dbReference type="ChEBI" id="CHEBI:58830"/>
    </ligand>
</feature>
<feature type="binding site" evidence="1">
    <location>
        <position position="120"/>
    </location>
    <ligand>
        <name>5-amino-6-(D-ribitylamino)uracil</name>
        <dbReference type="ChEBI" id="CHEBI:15934"/>
    </ligand>
</feature>
<feature type="binding site" evidence="1">
    <location>
        <position position="134"/>
    </location>
    <ligand>
        <name>(2S)-2-hydroxy-3-oxobutyl phosphate</name>
        <dbReference type="ChEBI" id="CHEBI:58830"/>
    </ligand>
</feature>
<comment type="function">
    <text evidence="1">Catalyzes the formation of 6,7-dimethyl-8-ribityllumazine by condensation of 5-amino-6-(D-ribitylamino)uracil with 3,4-dihydroxy-2-butanone 4-phosphate. This is the penultimate step in the biosynthesis of riboflavin.</text>
</comment>
<comment type="catalytic activity">
    <reaction evidence="1">
        <text>(2S)-2-hydroxy-3-oxobutyl phosphate + 5-amino-6-(D-ribitylamino)uracil = 6,7-dimethyl-8-(1-D-ribityl)lumazine + phosphate + 2 H2O + H(+)</text>
        <dbReference type="Rhea" id="RHEA:26152"/>
        <dbReference type="ChEBI" id="CHEBI:15377"/>
        <dbReference type="ChEBI" id="CHEBI:15378"/>
        <dbReference type="ChEBI" id="CHEBI:15934"/>
        <dbReference type="ChEBI" id="CHEBI:43474"/>
        <dbReference type="ChEBI" id="CHEBI:58201"/>
        <dbReference type="ChEBI" id="CHEBI:58830"/>
        <dbReference type="EC" id="2.5.1.78"/>
    </reaction>
</comment>
<comment type="pathway">
    <text evidence="1">Cofactor biosynthesis; riboflavin biosynthesis; riboflavin from 2-hydroxy-3-oxobutyl phosphate and 5-amino-6-(D-ribitylamino)uracil: step 1/2.</text>
</comment>
<comment type="similarity">
    <text evidence="1">Belongs to the DMRL synthase family.</text>
</comment>
<protein>
    <recommendedName>
        <fullName evidence="1">6,7-dimethyl-8-ribityllumazine synthase</fullName>
        <shortName evidence="1">DMRL synthase</shortName>
        <shortName evidence="1">LS</shortName>
        <shortName evidence="1">Lumazine synthase</shortName>
        <ecNumber evidence="1">2.5.1.78</ecNumber>
    </recommendedName>
</protein>
<gene>
    <name evidence="1" type="primary">ribH</name>
    <name type="ordered locus">Nwi_1723</name>
</gene>
<organism>
    <name type="scientific">Nitrobacter winogradskyi (strain ATCC 25391 / DSM 10237 / CIP 104748 / NCIMB 11846 / Nb-255)</name>
    <dbReference type="NCBI Taxonomy" id="323098"/>
    <lineage>
        <taxon>Bacteria</taxon>
        <taxon>Pseudomonadati</taxon>
        <taxon>Pseudomonadota</taxon>
        <taxon>Alphaproteobacteria</taxon>
        <taxon>Hyphomicrobiales</taxon>
        <taxon>Nitrobacteraceae</taxon>
        <taxon>Nitrobacter</taxon>
    </lineage>
</organism>
<keyword id="KW-1185">Reference proteome</keyword>
<keyword id="KW-0686">Riboflavin biosynthesis</keyword>
<keyword id="KW-0808">Transferase</keyword>
<dbReference type="EC" id="2.5.1.78" evidence="1"/>
<dbReference type="EMBL" id="CP000115">
    <property type="protein sequence ID" value="ABA04984.1"/>
    <property type="molecule type" value="Genomic_DNA"/>
</dbReference>
<dbReference type="RefSeq" id="WP_011314980.1">
    <property type="nucleotide sequence ID" value="NC_007406.1"/>
</dbReference>
<dbReference type="SMR" id="Q3SRV7"/>
<dbReference type="STRING" id="323098.Nwi_1723"/>
<dbReference type="KEGG" id="nwi:Nwi_1723"/>
<dbReference type="eggNOG" id="COG0054">
    <property type="taxonomic scope" value="Bacteria"/>
</dbReference>
<dbReference type="HOGENOM" id="CLU_089358_1_2_5"/>
<dbReference type="OrthoDB" id="9809709at2"/>
<dbReference type="UniPathway" id="UPA00275">
    <property type="reaction ID" value="UER00404"/>
</dbReference>
<dbReference type="Proteomes" id="UP000002531">
    <property type="component" value="Chromosome"/>
</dbReference>
<dbReference type="GO" id="GO:0005829">
    <property type="term" value="C:cytosol"/>
    <property type="evidence" value="ECO:0007669"/>
    <property type="project" value="TreeGrafter"/>
</dbReference>
<dbReference type="GO" id="GO:0009349">
    <property type="term" value="C:riboflavin synthase complex"/>
    <property type="evidence" value="ECO:0007669"/>
    <property type="project" value="InterPro"/>
</dbReference>
<dbReference type="GO" id="GO:0000906">
    <property type="term" value="F:6,7-dimethyl-8-ribityllumazine synthase activity"/>
    <property type="evidence" value="ECO:0007669"/>
    <property type="project" value="UniProtKB-UniRule"/>
</dbReference>
<dbReference type="GO" id="GO:0009231">
    <property type="term" value="P:riboflavin biosynthetic process"/>
    <property type="evidence" value="ECO:0007669"/>
    <property type="project" value="UniProtKB-UniRule"/>
</dbReference>
<dbReference type="CDD" id="cd09209">
    <property type="entry name" value="Lumazine_synthase-I"/>
    <property type="match status" value="1"/>
</dbReference>
<dbReference type="Gene3D" id="3.40.50.960">
    <property type="entry name" value="Lumazine/riboflavin synthase"/>
    <property type="match status" value="1"/>
</dbReference>
<dbReference type="HAMAP" id="MF_00178">
    <property type="entry name" value="Lumazine_synth"/>
    <property type="match status" value="1"/>
</dbReference>
<dbReference type="InterPro" id="IPR034964">
    <property type="entry name" value="LS"/>
</dbReference>
<dbReference type="InterPro" id="IPR002180">
    <property type="entry name" value="LS/RS"/>
</dbReference>
<dbReference type="InterPro" id="IPR036467">
    <property type="entry name" value="LS/RS_sf"/>
</dbReference>
<dbReference type="NCBIfam" id="TIGR00114">
    <property type="entry name" value="lumazine-synth"/>
    <property type="match status" value="1"/>
</dbReference>
<dbReference type="PANTHER" id="PTHR21058:SF0">
    <property type="entry name" value="6,7-DIMETHYL-8-RIBITYLLUMAZINE SYNTHASE"/>
    <property type="match status" value="1"/>
</dbReference>
<dbReference type="PANTHER" id="PTHR21058">
    <property type="entry name" value="6,7-DIMETHYL-8-RIBITYLLUMAZINE SYNTHASE DMRL SYNTHASE LUMAZINE SYNTHASE"/>
    <property type="match status" value="1"/>
</dbReference>
<dbReference type="Pfam" id="PF00885">
    <property type="entry name" value="DMRL_synthase"/>
    <property type="match status" value="1"/>
</dbReference>
<dbReference type="SUPFAM" id="SSF52121">
    <property type="entry name" value="Lumazine synthase"/>
    <property type="match status" value="1"/>
</dbReference>